<organism>
    <name type="scientific">Cucumis sativus</name>
    <name type="common">Cucumber</name>
    <dbReference type="NCBI Taxonomy" id="3659"/>
    <lineage>
        <taxon>Eukaryota</taxon>
        <taxon>Viridiplantae</taxon>
        <taxon>Streptophyta</taxon>
        <taxon>Embryophyta</taxon>
        <taxon>Tracheophyta</taxon>
        <taxon>Spermatophyta</taxon>
        <taxon>Magnoliopsida</taxon>
        <taxon>eudicotyledons</taxon>
        <taxon>Gunneridae</taxon>
        <taxon>Pentapetalae</taxon>
        <taxon>rosids</taxon>
        <taxon>fabids</taxon>
        <taxon>Cucurbitales</taxon>
        <taxon>Cucurbitaceae</taxon>
        <taxon>Benincaseae</taxon>
        <taxon>Cucumis</taxon>
    </lineage>
</organism>
<keyword id="KW-0150">Chloroplast</keyword>
<keyword id="KW-0186">Copper</keyword>
<keyword id="KW-0903">Direct protein sequencing</keyword>
<keyword id="KW-0249">Electron transport</keyword>
<keyword id="KW-0472">Membrane</keyword>
<keyword id="KW-0479">Metal-binding</keyword>
<keyword id="KW-0934">Plastid</keyword>
<keyword id="KW-0793">Thylakoid</keyword>
<keyword id="KW-0813">Transport</keyword>
<proteinExistence type="evidence at protein level"/>
<protein>
    <recommendedName>
        <fullName>Plastocyanin</fullName>
    </recommendedName>
</protein>
<gene>
    <name type="primary">PETE</name>
</gene>
<sequence>IEILLGGDDGSLAFVPNNFTVASGEKITFKNNAGFPHNVVFDEDEIPSGVDSGKISMNEEDLLBAPGZVYZVZLTZKGSYSFYCSPHQGAGMVGKVTVN</sequence>
<comment type="function">
    <text>Participates in electron transfer between P700 and the cytochrome b6-f complex in photosystem I.</text>
</comment>
<comment type="cofactor">
    <cofactor evidence="1">
        <name>Cu(2+)</name>
        <dbReference type="ChEBI" id="CHEBI:29036"/>
    </cofactor>
</comment>
<comment type="subcellular location">
    <subcellularLocation>
        <location evidence="2">Plastid</location>
        <location evidence="2">Chloroplast thylakoid membrane</location>
        <topology>Peripheral membrane protein</topology>
        <orientation>Lumenal side</orientation>
    </subcellularLocation>
    <text>Loosely bound to the inner thylakoid membrane surface in chloroplasts.</text>
</comment>
<comment type="similarity">
    <text evidence="3">Belongs to the plastocyanin family.</text>
</comment>
<reference key="1">
    <citation type="journal article" date="1982" name="Phytochemistry">
        <title>The amino acid sequence of plastocyanin from Cucumis sativus.</title>
        <authorList>
            <person name="Ramshaw J.A.M."/>
            <person name="Felton A.A."/>
        </authorList>
    </citation>
    <scope>PROTEIN SEQUENCE</scope>
    <scope>SUBCELLULAR LOCATION</scope>
</reference>
<feature type="chain" id="PRO_0000085563" description="Plastocyanin">
    <location>
        <begin position="1"/>
        <end position="99"/>
    </location>
</feature>
<feature type="domain" description="Plastocyanin-like">
    <location>
        <begin position="1"/>
        <end position="99"/>
    </location>
</feature>
<feature type="binding site" evidence="1">
    <location>
        <position position="37"/>
    </location>
    <ligand>
        <name>Cu cation</name>
        <dbReference type="ChEBI" id="CHEBI:23378"/>
    </ligand>
</feature>
<feature type="binding site" evidence="1">
    <location>
        <position position="84"/>
    </location>
    <ligand>
        <name>Cu cation</name>
        <dbReference type="ChEBI" id="CHEBI:23378"/>
    </ligand>
</feature>
<feature type="binding site" evidence="1">
    <location>
        <position position="87"/>
    </location>
    <ligand>
        <name>Cu cation</name>
        <dbReference type="ChEBI" id="CHEBI:23378"/>
    </ligand>
</feature>
<feature type="binding site" evidence="1">
    <location>
        <position position="92"/>
    </location>
    <ligand>
        <name>Cu cation</name>
        <dbReference type="ChEBI" id="CHEBI:23378"/>
    </ligand>
</feature>
<name>PLAS_CUCSA</name>
<accession>P00293</accession>
<dbReference type="PIR" id="A00303">
    <property type="entry name" value="CUKV"/>
</dbReference>
<dbReference type="eggNOG" id="ENOG502RXIY">
    <property type="taxonomic scope" value="Eukaryota"/>
</dbReference>
<dbReference type="GO" id="GO:0009535">
    <property type="term" value="C:chloroplast thylakoid membrane"/>
    <property type="evidence" value="ECO:0007669"/>
    <property type="project" value="UniProtKB-SubCell"/>
</dbReference>
<dbReference type="GO" id="GO:0005507">
    <property type="term" value="F:copper ion binding"/>
    <property type="evidence" value="ECO:0007669"/>
    <property type="project" value="InterPro"/>
</dbReference>
<dbReference type="GO" id="GO:0009055">
    <property type="term" value="F:electron transfer activity"/>
    <property type="evidence" value="ECO:0007669"/>
    <property type="project" value="InterPro"/>
</dbReference>
<dbReference type="CDD" id="cd04219">
    <property type="entry name" value="Plastocyanin"/>
    <property type="match status" value="1"/>
</dbReference>
<dbReference type="Gene3D" id="2.60.40.420">
    <property type="entry name" value="Cupredoxins - blue copper proteins"/>
    <property type="match status" value="1"/>
</dbReference>
<dbReference type="InterPro" id="IPR000923">
    <property type="entry name" value="BlueCu_1"/>
</dbReference>
<dbReference type="InterPro" id="IPR028871">
    <property type="entry name" value="BlueCu_1_BS"/>
</dbReference>
<dbReference type="InterPro" id="IPR001235">
    <property type="entry name" value="Copper_blue_Plastocyanin"/>
</dbReference>
<dbReference type="InterPro" id="IPR008972">
    <property type="entry name" value="Cupredoxin"/>
</dbReference>
<dbReference type="InterPro" id="IPR002387">
    <property type="entry name" value="Plastocyanin"/>
</dbReference>
<dbReference type="NCBIfam" id="TIGR02656">
    <property type="entry name" value="cyanin_plasto"/>
    <property type="match status" value="1"/>
</dbReference>
<dbReference type="PANTHER" id="PTHR34192">
    <property type="entry name" value="PLASTOCYANIN MAJOR ISOFORM, CHLOROPLASTIC-RELATED"/>
    <property type="match status" value="1"/>
</dbReference>
<dbReference type="PANTHER" id="PTHR34192:SF10">
    <property type="entry name" value="PLASTOCYANIN MAJOR ISOFORM, CHLOROPLASTIC-RELATED"/>
    <property type="match status" value="1"/>
</dbReference>
<dbReference type="Pfam" id="PF00127">
    <property type="entry name" value="Copper-bind"/>
    <property type="match status" value="1"/>
</dbReference>
<dbReference type="PRINTS" id="PR00156">
    <property type="entry name" value="COPPERBLUE"/>
</dbReference>
<dbReference type="PRINTS" id="PR00157">
    <property type="entry name" value="PLASTOCYANIN"/>
</dbReference>
<dbReference type="SUPFAM" id="SSF49503">
    <property type="entry name" value="Cupredoxins"/>
    <property type="match status" value="1"/>
</dbReference>
<dbReference type="PROSITE" id="PS00196">
    <property type="entry name" value="COPPER_BLUE"/>
    <property type="match status" value="1"/>
</dbReference>
<evidence type="ECO:0000250" key="1">
    <source>
        <dbReference type="UniProtKB" id="P18068"/>
    </source>
</evidence>
<evidence type="ECO:0000269" key="2">
    <source ref="1"/>
</evidence>
<evidence type="ECO:0000305" key="3"/>